<sequence>MGKKLLQQRAGRGGINFRSPSWRRVGPARYPNIEGDHKGKIIDILHNPGVTAPVVKVKLDNGLQFYIPAVQGVAVGQEISIGKNATISNGNIVEVGQLPEGTVICNVEKLKGDGGKFARAAGSYAVISGKAGNKVLIKLSSEKIVEVSQNARATVGIIAGGGFVEKPLLKAGNNYWKYRVRAVKWPVVRGVAMNAVSHPHGGGLHQSVSRPSTVSRNAPPGRKVGHIASRRTGRRGGA</sequence>
<proteinExistence type="evidence at protein level"/>
<accession>Q4JB43</accession>
<organism>
    <name type="scientific">Sulfolobus acidocaldarius (strain ATCC 33909 / DSM 639 / JCM 8929 / NBRC 15157 / NCIMB 11770)</name>
    <dbReference type="NCBI Taxonomy" id="330779"/>
    <lineage>
        <taxon>Archaea</taxon>
        <taxon>Thermoproteota</taxon>
        <taxon>Thermoprotei</taxon>
        <taxon>Sulfolobales</taxon>
        <taxon>Sulfolobaceae</taxon>
        <taxon>Sulfolobus</taxon>
    </lineage>
</organism>
<dbReference type="EMBL" id="CP000077">
    <property type="protein sequence ID" value="AAY79986.1"/>
    <property type="molecule type" value="Genomic_DNA"/>
</dbReference>
<dbReference type="RefSeq" id="WP_011277488.1">
    <property type="nucleotide sequence ID" value="NC_007181.1"/>
</dbReference>
<dbReference type="PDB" id="8HKU">
    <property type="method" value="EM"/>
    <property type="resolution" value="2.72 A"/>
    <property type="chains" value="AL2P=2-235"/>
</dbReference>
<dbReference type="PDB" id="8HKV">
    <property type="method" value="EM"/>
    <property type="resolution" value="4.94 A"/>
    <property type="chains" value="AL2P=2-235"/>
</dbReference>
<dbReference type="PDB" id="8HKY">
    <property type="method" value="EM"/>
    <property type="resolution" value="4.45 A"/>
    <property type="chains" value="AL2P=2-235"/>
</dbReference>
<dbReference type="PDB" id="8HKZ">
    <property type="method" value="EM"/>
    <property type="resolution" value="4.78 A"/>
    <property type="chains" value="AL2P=2-235"/>
</dbReference>
<dbReference type="PDB" id="8HL1">
    <property type="method" value="EM"/>
    <property type="resolution" value="3.93 A"/>
    <property type="chains" value="AL2P=2-235"/>
</dbReference>
<dbReference type="PDB" id="8HL2">
    <property type="method" value="EM"/>
    <property type="resolution" value="4.10 A"/>
    <property type="chains" value="AL2P=2-235"/>
</dbReference>
<dbReference type="PDB" id="8HL3">
    <property type="method" value="EM"/>
    <property type="resolution" value="4.80 A"/>
    <property type="chains" value="AL2P=2-235"/>
</dbReference>
<dbReference type="PDB" id="8HL4">
    <property type="method" value="EM"/>
    <property type="resolution" value="4.62 A"/>
    <property type="chains" value="AL2P=2-235"/>
</dbReference>
<dbReference type="PDB" id="8HL5">
    <property type="method" value="EM"/>
    <property type="resolution" value="5.72 A"/>
    <property type="chains" value="AL2P=2-235"/>
</dbReference>
<dbReference type="PDBsum" id="8HKU"/>
<dbReference type="PDBsum" id="8HKV"/>
<dbReference type="PDBsum" id="8HKY"/>
<dbReference type="PDBsum" id="8HKZ"/>
<dbReference type="PDBsum" id="8HL1"/>
<dbReference type="PDBsum" id="8HL2"/>
<dbReference type="PDBsum" id="8HL3"/>
<dbReference type="PDBsum" id="8HL4"/>
<dbReference type="PDBsum" id="8HL5"/>
<dbReference type="EMDB" id="EMD-34860"/>
<dbReference type="EMDB" id="EMD-34861"/>
<dbReference type="EMDB" id="EMD-34863"/>
<dbReference type="EMDB" id="EMD-34864"/>
<dbReference type="EMDB" id="EMD-34866"/>
<dbReference type="EMDB" id="EMD-34867"/>
<dbReference type="EMDB" id="EMD-34868"/>
<dbReference type="EMDB" id="EMD-34869"/>
<dbReference type="EMDB" id="EMD-34870"/>
<dbReference type="SMR" id="Q4JB43"/>
<dbReference type="STRING" id="330779.Saci_0594"/>
<dbReference type="GeneID" id="14551115"/>
<dbReference type="KEGG" id="sai:Saci_0594"/>
<dbReference type="PATRIC" id="fig|330779.12.peg.573"/>
<dbReference type="eggNOG" id="arCOG04067">
    <property type="taxonomic scope" value="Archaea"/>
</dbReference>
<dbReference type="HOGENOM" id="CLU_036235_0_1_2"/>
<dbReference type="Proteomes" id="UP000001018">
    <property type="component" value="Chromosome"/>
</dbReference>
<dbReference type="GO" id="GO:0022625">
    <property type="term" value="C:cytosolic large ribosomal subunit"/>
    <property type="evidence" value="ECO:0007669"/>
    <property type="project" value="TreeGrafter"/>
</dbReference>
<dbReference type="GO" id="GO:0019843">
    <property type="term" value="F:rRNA binding"/>
    <property type="evidence" value="ECO:0007669"/>
    <property type="project" value="UniProtKB-UniRule"/>
</dbReference>
<dbReference type="GO" id="GO:0003735">
    <property type="term" value="F:structural constituent of ribosome"/>
    <property type="evidence" value="ECO:0007669"/>
    <property type="project" value="InterPro"/>
</dbReference>
<dbReference type="GO" id="GO:0002181">
    <property type="term" value="P:cytoplasmic translation"/>
    <property type="evidence" value="ECO:0007669"/>
    <property type="project" value="TreeGrafter"/>
</dbReference>
<dbReference type="FunFam" id="4.10.950.10:FF:000002">
    <property type="entry name" value="60S ribosomal protein L2"/>
    <property type="match status" value="1"/>
</dbReference>
<dbReference type="Gene3D" id="2.30.30.30">
    <property type="match status" value="1"/>
</dbReference>
<dbReference type="Gene3D" id="2.40.50.140">
    <property type="entry name" value="Nucleic acid-binding proteins"/>
    <property type="match status" value="1"/>
</dbReference>
<dbReference type="Gene3D" id="4.10.950.10">
    <property type="entry name" value="Ribosomal protein L2, domain 3"/>
    <property type="match status" value="1"/>
</dbReference>
<dbReference type="HAMAP" id="MF_01320_A">
    <property type="entry name" value="Ribosomal_uL2_A"/>
    <property type="match status" value="1"/>
</dbReference>
<dbReference type="InterPro" id="IPR012340">
    <property type="entry name" value="NA-bd_OB-fold"/>
</dbReference>
<dbReference type="InterPro" id="IPR014722">
    <property type="entry name" value="Rib_uL2_dom2"/>
</dbReference>
<dbReference type="InterPro" id="IPR002171">
    <property type="entry name" value="Ribosomal_uL2"/>
</dbReference>
<dbReference type="InterPro" id="IPR023672">
    <property type="entry name" value="Ribosomal_uL2_arc_euk"/>
</dbReference>
<dbReference type="InterPro" id="IPR022669">
    <property type="entry name" value="Ribosomal_uL2_C"/>
</dbReference>
<dbReference type="InterPro" id="IPR014726">
    <property type="entry name" value="Ribosomal_uL2_dom3"/>
</dbReference>
<dbReference type="InterPro" id="IPR022666">
    <property type="entry name" value="Ribosomal_uL2_RNA-bd_dom"/>
</dbReference>
<dbReference type="InterPro" id="IPR008991">
    <property type="entry name" value="Translation_prot_SH3-like_sf"/>
</dbReference>
<dbReference type="NCBIfam" id="NF007180">
    <property type="entry name" value="PRK09612.1"/>
    <property type="match status" value="1"/>
</dbReference>
<dbReference type="PANTHER" id="PTHR13691:SF16">
    <property type="entry name" value="LARGE RIBOSOMAL SUBUNIT PROTEIN UL2"/>
    <property type="match status" value="1"/>
</dbReference>
<dbReference type="PANTHER" id="PTHR13691">
    <property type="entry name" value="RIBOSOMAL PROTEIN L2"/>
    <property type="match status" value="1"/>
</dbReference>
<dbReference type="Pfam" id="PF00181">
    <property type="entry name" value="Ribosomal_L2"/>
    <property type="match status" value="1"/>
</dbReference>
<dbReference type="Pfam" id="PF03947">
    <property type="entry name" value="Ribosomal_L2_C"/>
    <property type="match status" value="1"/>
</dbReference>
<dbReference type="PIRSF" id="PIRSF002158">
    <property type="entry name" value="Ribosomal_L2"/>
    <property type="match status" value="1"/>
</dbReference>
<dbReference type="SMART" id="SM01383">
    <property type="entry name" value="Ribosomal_L2"/>
    <property type="match status" value="1"/>
</dbReference>
<dbReference type="SMART" id="SM01382">
    <property type="entry name" value="Ribosomal_L2_C"/>
    <property type="match status" value="1"/>
</dbReference>
<dbReference type="SUPFAM" id="SSF50249">
    <property type="entry name" value="Nucleic acid-binding proteins"/>
    <property type="match status" value="1"/>
</dbReference>
<dbReference type="SUPFAM" id="SSF50104">
    <property type="entry name" value="Translation proteins SH3-like domain"/>
    <property type="match status" value="1"/>
</dbReference>
<keyword id="KW-0002">3D-structure</keyword>
<keyword id="KW-1185">Reference proteome</keyword>
<keyword id="KW-0687">Ribonucleoprotein</keyword>
<keyword id="KW-0689">Ribosomal protein</keyword>
<keyword id="KW-0694">RNA-binding</keyword>
<keyword id="KW-0699">rRNA-binding</keyword>
<comment type="function">
    <text evidence="1">One of the primary rRNA binding proteins. Required for association of the 30S and 50S subunits to form the 70S ribosome, for tRNA binding and peptide bond formation. It has been suggested to have peptidyltransferase activity; this is somewhat controversial. Makes several contacts with the 16S rRNA in the 70S ribosome.</text>
</comment>
<comment type="subunit">
    <text evidence="1">Part of the 50S ribosomal subunit. Forms a bridge to the 30S subunit in the 70S ribosome.</text>
</comment>
<comment type="similarity">
    <text evidence="1">Belongs to the universal ribosomal protein uL2 family.</text>
</comment>
<feature type="chain" id="PRO_0000129726" description="Large ribosomal subunit protein uL2">
    <location>
        <begin position="1"/>
        <end position="238"/>
    </location>
</feature>
<feature type="region of interest" description="Disordered" evidence="2">
    <location>
        <begin position="198"/>
        <end position="238"/>
    </location>
</feature>
<feature type="compositionally biased region" description="Polar residues" evidence="2">
    <location>
        <begin position="206"/>
        <end position="216"/>
    </location>
</feature>
<feature type="compositionally biased region" description="Basic residues" evidence="2">
    <location>
        <begin position="223"/>
        <end position="238"/>
    </location>
</feature>
<evidence type="ECO:0000255" key="1">
    <source>
        <dbReference type="HAMAP-Rule" id="MF_01320"/>
    </source>
</evidence>
<evidence type="ECO:0000256" key="2">
    <source>
        <dbReference type="SAM" id="MobiDB-lite"/>
    </source>
</evidence>
<evidence type="ECO:0000305" key="3"/>
<gene>
    <name evidence="1" type="primary">rpl2</name>
    <name type="ordered locus">Saci_0594</name>
</gene>
<protein>
    <recommendedName>
        <fullName evidence="1">Large ribosomal subunit protein uL2</fullName>
    </recommendedName>
    <alternativeName>
        <fullName evidence="3">50S ribosomal protein L2</fullName>
    </alternativeName>
</protein>
<reference key="1">
    <citation type="journal article" date="2005" name="J. Bacteriol.">
        <title>The genome of Sulfolobus acidocaldarius, a model organism of the Crenarchaeota.</title>
        <authorList>
            <person name="Chen L."/>
            <person name="Bruegger K."/>
            <person name="Skovgaard M."/>
            <person name="Redder P."/>
            <person name="She Q."/>
            <person name="Torarinsson E."/>
            <person name="Greve B."/>
            <person name="Awayez M."/>
            <person name="Zibat A."/>
            <person name="Klenk H.-P."/>
            <person name="Garrett R.A."/>
        </authorList>
    </citation>
    <scope>NUCLEOTIDE SEQUENCE [LARGE SCALE GENOMIC DNA]</scope>
    <source>
        <strain>ATCC 33909 / DSM 639 / JCM 8929 / NBRC 15157 / NCIMB 11770</strain>
    </source>
</reference>
<name>RL2_SULAC</name>